<name>ALR_BURMS</name>
<organism>
    <name type="scientific">Burkholderia mallei (strain SAVP1)</name>
    <dbReference type="NCBI Taxonomy" id="320388"/>
    <lineage>
        <taxon>Bacteria</taxon>
        <taxon>Pseudomonadati</taxon>
        <taxon>Pseudomonadota</taxon>
        <taxon>Betaproteobacteria</taxon>
        <taxon>Burkholderiales</taxon>
        <taxon>Burkholderiaceae</taxon>
        <taxon>Burkholderia</taxon>
        <taxon>pseudomallei group</taxon>
    </lineage>
</organism>
<sequence>MPRPISATIHTAALANNLSVVRRHAAQSKVWAIVKANAYGHGLARVFPGLRGTDGFGLLDLDEAVKLRELGWAGPILLLEGFFRSTDIDVIDRYSLTTAVHNDEQMRMLETARLSKPVNVQLKMNSGMNRLGYTPEKYRAAWERARACPGIGQITLMTHFSDADGERGVAEQMATFERGAQGIAGARSFANSAAVLWHPSAHFDWVRPGIMLYGASPSGRAADIADRGLKPTMTLASELIAVQTLAKGQAVGYGSMFVAEDTMRIGVVACGYADGYPRIAPEGTPVVVDGVRTRIVGRVSMDMLTVDLTPVPQAGVGARVELWGETLPIDDVAARCMTVGYELMCAVAPRVPVRAE</sequence>
<proteinExistence type="inferred from homology"/>
<feature type="chain" id="PRO_1000065977" description="Alanine racemase">
    <location>
        <begin position="1"/>
        <end position="356"/>
    </location>
</feature>
<feature type="active site" description="Proton acceptor; specific for D-alanine" evidence="1">
    <location>
        <position position="35"/>
    </location>
</feature>
<feature type="active site" description="Proton acceptor; specific for L-alanine" evidence="1">
    <location>
        <position position="253"/>
    </location>
</feature>
<feature type="binding site" evidence="1">
    <location>
        <position position="130"/>
    </location>
    <ligand>
        <name>substrate</name>
    </ligand>
</feature>
<feature type="binding site" evidence="1">
    <location>
        <position position="301"/>
    </location>
    <ligand>
        <name>substrate</name>
    </ligand>
</feature>
<feature type="modified residue" description="N6-(pyridoxal phosphate)lysine" evidence="1">
    <location>
        <position position="35"/>
    </location>
</feature>
<accession>A1V591</accession>
<evidence type="ECO:0000255" key="1">
    <source>
        <dbReference type="HAMAP-Rule" id="MF_01201"/>
    </source>
</evidence>
<dbReference type="EC" id="5.1.1.1" evidence="1"/>
<dbReference type="EMBL" id="CP000526">
    <property type="protein sequence ID" value="ABM52249.1"/>
    <property type="molecule type" value="Genomic_DNA"/>
</dbReference>
<dbReference type="RefSeq" id="WP_004191260.1">
    <property type="nucleotide sequence ID" value="NC_008785.1"/>
</dbReference>
<dbReference type="SMR" id="A1V591"/>
<dbReference type="GeneID" id="93060719"/>
<dbReference type="KEGG" id="bmv:BMASAVP1_A2078"/>
<dbReference type="HOGENOM" id="CLU_028393_1_0_4"/>
<dbReference type="UniPathway" id="UPA00042">
    <property type="reaction ID" value="UER00497"/>
</dbReference>
<dbReference type="GO" id="GO:0005829">
    <property type="term" value="C:cytosol"/>
    <property type="evidence" value="ECO:0007669"/>
    <property type="project" value="TreeGrafter"/>
</dbReference>
<dbReference type="GO" id="GO:0008784">
    <property type="term" value="F:alanine racemase activity"/>
    <property type="evidence" value="ECO:0007669"/>
    <property type="project" value="UniProtKB-UniRule"/>
</dbReference>
<dbReference type="GO" id="GO:0030170">
    <property type="term" value="F:pyridoxal phosphate binding"/>
    <property type="evidence" value="ECO:0007669"/>
    <property type="project" value="UniProtKB-UniRule"/>
</dbReference>
<dbReference type="GO" id="GO:0030632">
    <property type="term" value="P:D-alanine biosynthetic process"/>
    <property type="evidence" value="ECO:0007669"/>
    <property type="project" value="UniProtKB-UniRule"/>
</dbReference>
<dbReference type="CDD" id="cd06827">
    <property type="entry name" value="PLPDE_III_AR_proteobact"/>
    <property type="match status" value="1"/>
</dbReference>
<dbReference type="FunFam" id="2.40.37.10:FF:000002">
    <property type="entry name" value="Alanine racemase"/>
    <property type="match status" value="1"/>
</dbReference>
<dbReference type="FunFam" id="3.20.20.10:FF:000002">
    <property type="entry name" value="Alanine racemase"/>
    <property type="match status" value="1"/>
</dbReference>
<dbReference type="Gene3D" id="3.20.20.10">
    <property type="entry name" value="Alanine racemase"/>
    <property type="match status" value="1"/>
</dbReference>
<dbReference type="Gene3D" id="2.40.37.10">
    <property type="entry name" value="Lyase, Ornithine Decarboxylase, Chain A, domain 1"/>
    <property type="match status" value="1"/>
</dbReference>
<dbReference type="HAMAP" id="MF_01201">
    <property type="entry name" value="Ala_racemase"/>
    <property type="match status" value="1"/>
</dbReference>
<dbReference type="InterPro" id="IPR000821">
    <property type="entry name" value="Ala_racemase"/>
</dbReference>
<dbReference type="InterPro" id="IPR009006">
    <property type="entry name" value="Ala_racemase/Decarboxylase_C"/>
</dbReference>
<dbReference type="InterPro" id="IPR011079">
    <property type="entry name" value="Ala_racemase_C"/>
</dbReference>
<dbReference type="InterPro" id="IPR001608">
    <property type="entry name" value="Ala_racemase_N"/>
</dbReference>
<dbReference type="InterPro" id="IPR020622">
    <property type="entry name" value="Ala_racemase_pyridoxalP-BS"/>
</dbReference>
<dbReference type="InterPro" id="IPR029066">
    <property type="entry name" value="PLP-binding_barrel"/>
</dbReference>
<dbReference type="NCBIfam" id="TIGR00492">
    <property type="entry name" value="alr"/>
    <property type="match status" value="1"/>
</dbReference>
<dbReference type="PANTHER" id="PTHR30511">
    <property type="entry name" value="ALANINE RACEMASE"/>
    <property type="match status" value="1"/>
</dbReference>
<dbReference type="PANTHER" id="PTHR30511:SF0">
    <property type="entry name" value="ALANINE RACEMASE, CATABOLIC-RELATED"/>
    <property type="match status" value="1"/>
</dbReference>
<dbReference type="Pfam" id="PF00842">
    <property type="entry name" value="Ala_racemase_C"/>
    <property type="match status" value="1"/>
</dbReference>
<dbReference type="Pfam" id="PF01168">
    <property type="entry name" value="Ala_racemase_N"/>
    <property type="match status" value="1"/>
</dbReference>
<dbReference type="PRINTS" id="PR00992">
    <property type="entry name" value="ALARACEMASE"/>
</dbReference>
<dbReference type="SMART" id="SM01005">
    <property type="entry name" value="Ala_racemase_C"/>
    <property type="match status" value="1"/>
</dbReference>
<dbReference type="SUPFAM" id="SSF50621">
    <property type="entry name" value="Alanine racemase C-terminal domain-like"/>
    <property type="match status" value="1"/>
</dbReference>
<dbReference type="SUPFAM" id="SSF51419">
    <property type="entry name" value="PLP-binding barrel"/>
    <property type="match status" value="1"/>
</dbReference>
<dbReference type="PROSITE" id="PS00395">
    <property type="entry name" value="ALANINE_RACEMASE"/>
    <property type="match status" value="1"/>
</dbReference>
<reference key="1">
    <citation type="journal article" date="2010" name="Genome Biol. Evol.">
        <title>Continuing evolution of Burkholderia mallei through genome reduction and large-scale rearrangements.</title>
        <authorList>
            <person name="Losada L."/>
            <person name="Ronning C.M."/>
            <person name="DeShazer D."/>
            <person name="Woods D."/>
            <person name="Fedorova N."/>
            <person name="Kim H.S."/>
            <person name="Shabalina S.A."/>
            <person name="Pearson T.R."/>
            <person name="Brinkac L."/>
            <person name="Tan P."/>
            <person name="Nandi T."/>
            <person name="Crabtree J."/>
            <person name="Badger J."/>
            <person name="Beckstrom-Sternberg S."/>
            <person name="Saqib M."/>
            <person name="Schutzer S.E."/>
            <person name="Keim P."/>
            <person name="Nierman W.C."/>
        </authorList>
    </citation>
    <scope>NUCLEOTIDE SEQUENCE [LARGE SCALE GENOMIC DNA]</scope>
    <source>
        <strain>SAVP1</strain>
    </source>
</reference>
<protein>
    <recommendedName>
        <fullName evidence="1">Alanine racemase</fullName>
        <ecNumber evidence="1">5.1.1.1</ecNumber>
    </recommendedName>
</protein>
<gene>
    <name type="primary">alr</name>
    <name type="ordered locus">BMASAVP1_A2078</name>
</gene>
<comment type="function">
    <text evidence="1">Catalyzes the interconversion of L-alanine and D-alanine. May also act on other amino acids.</text>
</comment>
<comment type="catalytic activity">
    <reaction evidence="1">
        <text>L-alanine = D-alanine</text>
        <dbReference type="Rhea" id="RHEA:20249"/>
        <dbReference type="ChEBI" id="CHEBI:57416"/>
        <dbReference type="ChEBI" id="CHEBI:57972"/>
        <dbReference type="EC" id="5.1.1.1"/>
    </reaction>
</comment>
<comment type="cofactor">
    <cofactor evidence="1">
        <name>pyridoxal 5'-phosphate</name>
        <dbReference type="ChEBI" id="CHEBI:597326"/>
    </cofactor>
</comment>
<comment type="pathway">
    <text evidence="1">Amino-acid biosynthesis; D-alanine biosynthesis; D-alanine from L-alanine: step 1/1.</text>
</comment>
<comment type="similarity">
    <text evidence="1">Belongs to the alanine racemase family.</text>
</comment>
<keyword id="KW-0413">Isomerase</keyword>
<keyword id="KW-0663">Pyridoxal phosphate</keyword>